<sequence>MNFHKGQPKEDLRVLFGPQCPDITDSITHIRDAISKDPTGLGFLTNILDELPSLWPTIAGAWPALKNVEGESQLLALGRLFEHESEDRVEASNLMMTPITVMRHIVDFWNLQDVATHPAFPSSSLSETEMPRIVDTQGFCVGLLAAIAVACSRNTQEFQYVASNAIRLSLCVGALVDLDEILCGSTTSLAVSAERVKQEIHDHGLRTKQLSLRGRFHHEAHREGIQHIMKLCTNDSRFKLPRSDALLTPLRSSQGGEIFQQEALLHTVALDSILCAKANWYDVVSALINSTEMTVDQSHLLSIGPEEFVPRSARSRSVARRELQSYAMQGFSNESPQPSTASLSNSVQTFDSRPQAAEASPIAITGMACRYPNADTLAQLWDLLELGRCTVKSPPESRFHMSDLQREPKGPFWGHFLERPDVFDHRFFNISAREAESMDPQQRVALQVAYEAMESAGYLGWQPNGLSRDIGCYVGVGSEDYTENVASRNANAFSITGTLQSFIAGRISHHFGWSGPSISLDTACSSAAVAIHLACKALQTNDCKIALAGGVNVLTNPRVYQNLSAASFLSPSGACKPFDASADGYCRGEGAGLFVLRPLQDAIDNGDPILGVIAGSAVNQGSNNSPITVPDAEAQRSLYNKAMSLAGVSPDEVTYVEAHGTGTQVGDPIELDSLRRTFGGPQRRNSLHIGSIKGNIGHTETSSGAAGLLKTILMLQQQRIPRQANFNQLNPKVKSLTPDRLVIASESTEWASTERVAMVSNYGASGSNAALIVKEHAPIRSEQNGTAPEYIQNVPILVSARSEESLRAYCGALRATLLSHPPSETLVQKLAYNLAMKQNRDLPLNLTFSTSSDATSLSARLEAISTGASADLIQKRPSNEPPVVLCFGGQNGLTATISKEVFDASALLRTHLEDCEEVGRTLGLPSLFPTIFSSAPITNIIHLHFILFSIQYASAKAWLDSGLRVSRIVGHSFGQLTALSVAGSLSVRDGIHLVTERARLIESSWGPESGIMLAVEGTDIEVQQLLDQTGHIADVACYNGPRQQVLAGTAESIAAIENAAARTPSASKLRLTRLQNSHAFHSRLVDSIVPAIMEVAGSLVYQTPIIPIEACSASGDWSTITAAEIVEHSRMPVYFRRAVERVAEKLQAPAVWLEAGSASPIIPMVRRVLESSSVANTYHKIDLGGSSGAQNLANVTSALWAQGVHVQFWPFDRAQHGSFKWMNLPPYQFAQNSHWVDFDPAAFSSAGPSSGKQSAGQEAGLLCQLSESPDERLYHVNIQDALYRACTQGHAVLNQTLCPASMYMEMVLRAAASIFPTGNASEPAMSHIEDLTISSPLVLDPQGDVFLRLTSDGAGPTRPWLFSIFSSESNDHTSVHAEGTVCLHQERSRALARFQSMDRLLDSARSKTIEADPASNGLKGSTVYAALESVTNYGDYFRGVKKVFANGREASGLVSMMPSASETNCDPILLDNFLQVAGIHVNCLSDRRSSEVFVCNAIGETFVINSLLKQKNGASPSTWKVYTSYVRPSKTEIACDIYVMDCQTDTLSAAMMGVRFTSVSIRSLTRALAKLNNNVLETAEAQSVVEPAIPAEKSVVTATPSAPAADGGGAKDLATVQEMLCELFGVSVAEVSPSVSLVDIGVDSLMSTEVLSEIKKRFQVDMSYTTLVDIPNIQGLVEHIFPGHSHAAPSQPVVETAPVQSVAPQAVSHVPTPANNGPPLVSVARQCFDTTHAAVSHTSDAHWTGFFHTTYPKQMTLLTAYILEAFRALGSPLEASEPNEVLIPISVLPRHEQLRKHLYKILESVGLVRQMPTGELVRTTTPIPLSQSHDLHTQIRAEYPPYALEHDLLQITAPRLADCLTGKADGVSLIFQDANTRRLVGDVYAQSPVFKSGNLYLARYLLDVVQSFGSSRTIKILEIGAGTGGTTKNLLEKLSTIPGLSTRLEYTFTDISPSLVAAGRKTFANYNFMRYETLNVENDPPSALSGQYDIVLSTNCVHATRNLRESCTNIRKLLRPDGILCLVELTRDIFWLDLVFGLLEGWWRFEDGREHALATEMMWDQTLRQSGFEWVDWTNNETVESNALRVIVASPTGNSSTATMSPSKLTKMETVVWGERDNLQLRADIYYPETVDTTRKQRPIALMIHGGGHVMLSRKDIRPAQTQTLLDAGFLPVSIDYRLCPEVSLAEGPMADARDALSWVRRVLPNIPLLRADIRPDGNQVVAIGWSTGGHLAMTLPFTAPAAGISAPNAVLAFYCPTNYEDPFWSNPNFPFGQTVASNEMEYDVWEGLQSMPIAGYNPALKERPLGGWMSTRDPRSRIALHMNWTGQTLPVLLKACTIKGNTEKCSPDDLSRPTEEEIQAVSPNYQIRVGRYNTPTFLIHGTSDDLVPCAQTESTHGALTASGVEAELRVVQEAAHLFDLYPASHAGQEAKAAVAEGYEFLRRHVQL</sequence>
<evidence type="ECO:0000250" key="1">
    <source>
        <dbReference type="UniProtKB" id="A0A0B5KU17"/>
    </source>
</evidence>
<evidence type="ECO:0000250" key="2">
    <source>
        <dbReference type="UniProtKB" id="Q5ATJ7"/>
    </source>
</evidence>
<evidence type="ECO:0000250" key="3">
    <source>
        <dbReference type="UniProtKB" id="Q5B0D0"/>
    </source>
</evidence>
<evidence type="ECO:0000255" key="4"/>
<evidence type="ECO:0000255" key="5">
    <source>
        <dbReference type="PROSITE-ProRule" id="PRU00258"/>
    </source>
</evidence>
<evidence type="ECO:0000255" key="6">
    <source>
        <dbReference type="PROSITE-ProRule" id="PRU01348"/>
    </source>
</evidence>
<evidence type="ECO:0000255" key="7">
    <source>
        <dbReference type="PROSITE-ProRule" id="PRU01363"/>
    </source>
</evidence>
<evidence type="ECO:0000255" key="8">
    <source>
        <dbReference type="PROSITE-ProRule" id="PRU10022"/>
    </source>
</evidence>
<evidence type="ECO:0000256" key="9">
    <source>
        <dbReference type="SAM" id="MobiDB-lite"/>
    </source>
</evidence>
<evidence type="ECO:0000269" key="10">
    <source>
    </source>
</evidence>
<evidence type="ECO:0000269" key="11">
    <source>
    </source>
</evidence>
<evidence type="ECO:0000303" key="12">
    <source>
    </source>
</evidence>
<evidence type="ECO:0000305" key="13">
    <source>
    </source>
</evidence>
<evidence type="ECO:0000305" key="14">
    <source>
    </source>
</evidence>
<gene>
    <name evidence="12" type="primary">mpaC</name>
</gene>
<proteinExistence type="evidence at protein level"/>
<keyword id="KW-0963">Cytoplasm</keyword>
<keyword id="KW-0489">Methyltransferase</keyword>
<keyword id="KW-0511">Multifunctional enzyme</keyword>
<keyword id="KW-0596">Phosphopantetheine</keyword>
<keyword id="KW-0597">Phosphoprotein</keyword>
<keyword id="KW-0808">Transferase</keyword>
<protein>
    <recommendedName>
        <fullName evidence="12">Non-reducing polyketide synthase mapC</fullName>
        <ecNumber evidence="11">2.3.1.-</ecNumber>
    </recommendedName>
    <alternativeName>
        <fullName evidence="12">Mycophenolic acid biosynthesis cluster protein C</fullName>
    </alternativeName>
</protein>
<dbReference type="EC" id="2.3.1.-" evidence="11"/>
<dbReference type="EMBL" id="HQ731031">
    <property type="protein sequence ID" value="ADY00130.1"/>
    <property type="molecule type" value="Genomic_DNA"/>
</dbReference>
<dbReference type="SMR" id="F1DBA9"/>
<dbReference type="ESTHER" id="penbr-mpac">
    <property type="family name" value="BD-FAE"/>
</dbReference>
<dbReference type="UniPathway" id="UPA00213"/>
<dbReference type="GO" id="GO:0005829">
    <property type="term" value="C:cytosol"/>
    <property type="evidence" value="ECO:0000250"/>
    <property type="project" value="GO_Central"/>
</dbReference>
<dbReference type="GO" id="GO:0004315">
    <property type="term" value="F:3-oxoacyl-[acyl-carrier-protein] synthase activity"/>
    <property type="evidence" value="ECO:0007669"/>
    <property type="project" value="InterPro"/>
</dbReference>
<dbReference type="GO" id="GO:0004312">
    <property type="term" value="F:fatty acid synthase activity"/>
    <property type="evidence" value="ECO:0007669"/>
    <property type="project" value="TreeGrafter"/>
</dbReference>
<dbReference type="GO" id="GO:0008168">
    <property type="term" value="F:methyltransferase activity"/>
    <property type="evidence" value="ECO:0007669"/>
    <property type="project" value="UniProtKB-KW"/>
</dbReference>
<dbReference type="GO" id="GO:0031177">
    <property type="term" value="F:phosphopantetheine binding"/>
    <property type="evidence" value="ECO:0007669"/>
    <property type="project" value="InterPro"/>
</dbReference>
<dbReference type="GO" id="GO:0008236">
    <property type="term" value="F:serine-type peptidase activity"/>
    <property type="evidence" value="ECO:0007669"/>
    <property type="project" value="InterPro"/>
</dbReference>
<dbReference type="GO" id="GO:0006633">
    <property type="term" value="P:fatty acid biosynthetic process"/>
    <property type="evidence" value="ECO:0007669"/>
    <property type="project" value="InterPro"/>
</dbReference>
<dbReference type="GO" id="GO:0032259">
    <property type="term" value="P:methylation"/>
    <property type="evidence" value="ECO:0007669"/>
    <property type="project" value="UniProtKB-KW"/>
</dbReference>
<dbReference type="GO" id="GO:0140722">
    <property type="term" value="P:mycophenolic acid biosynthetic process"/>
    <property type="evidence" value="ECO:0000314"/>
    <property type="project" value="GO_Central"/>
</dbReference>
<dbReference type="GO" id="GO:0006508">
    <property type="term" value="P:proteolysis"/>
    <property type="evidence" value="ECO:0007669"/>
    <property type="project" value="InterPro"/>
</dbReference>
<dbReference type="GO" id="GO:0016114">
    <property type="term" value="P:terpenoid biosynthetic process"/>
    <property type="evidence" value="ECO:0007669"/>
    <property type="project" value="UniProtKB-UniPathway"/>
</dbReference>
<dbReference type="CDD" id="cd02440">
    <property type="entry name" value="AdoMet_MTases"/>
    <property type="match status" value="1"/>
</dbReference>
<dbReference type="CDD" id="cd00833">
    <property type="entry name" value="PKS"/>
    <property type="match status" value="1"/>
</dbReference>
<dbReference type="Gene3D" id="3.30.70.3290">
    <property type="match status" value="1"/>
</dbReference>
<dbReference type="Gene3D" id="3.40.47.10">
    <property type="match status" value="1"/>
</dbReference>
<dbReference type="Gene3D" id="1.10.1200.10">
    <property type="entry name" value="ACP-like"/>
    <property type="match status" value="1"/>
</dbReference>
<dbReference type="Gene3D" id="3.40.50.1820">
    <property type="entry name" value="alpha/beta hydrolase"/>
    <property type="match status" value="1"/>
</dbReference>
<dbReference type="Gene3D" id="3.40.366.10">
    <property type="entry name" value="Malonyl-Coenzyme A Acyl Carrier Protein, domain 2"/>
    <property type="match status" value="2"/>
</dbReference>
<dbReference type="Gene3D" id="3.10.129.110">
    <property type="entry name" value="Polyketide synthase dehydratase"/>
    <property type="match status" value="1"/>
</dbReference>
<dbReference type="Gene3D" id="3.40.50.150">
    <property type="entry name" value="Vaccinia Virus protein VP39"/>
    <property type="match status" value="1"/>
</dbReference>
<dbReference type="InterPro" id="IPR029058">
    <property type="entry name" value="AB_hydrolase_fold"/>
</dbReference>
<dbReference type="InterPro" id="IPR001227">
    <property type="entry name" value="Ac_transferase_dom_sf"/>
</dbReference>
<dbReference type="InterPro" id="IPR036736">
    <property type="entry name" value="ACP-like_sf"/>
</dbReference>
<dbReference type="InterPro" id="IPR014043">
    <property type="entry name" value="Acyl_transferase_dom"/>
</dbReference>
<dbReference type="InterPro" id="IPR016035">
    <property type="entry name" value="Acyl_Trfase/lysoPLipase"/>
</dbReference>
<dbReference type="InterPro" id="IPR049492">
    <property type="entry name" value="BD-FAE-like_dom"/>
</dbReference>
<dbReference type="InterPro" id="IPR018201">
    <property type="entry name" value="Ketoacyl_synth_AS"/>
</dbReference>
<dbReference type="InterPro" id="IPR014031">
    <property type="entry name" value="Ketoacyl_synth_C"/>
</dbReference>
<dbReference type="InterPro" id="IPR014030">
    <property type="entry name" value="Ketoacyl_synth_N"/>
</dbReference>
<dbReference type="InterPro" id="IPR016036">
    <property type="entry name" value="Malonyl_transacylase_ACP-bd"/>
</dbReference>
<dbReference type="InterPro" id="IPR013217">
    <property type="entry name" value="Methyltransf_12"/>
</dbReference>
<dbReference type="InterPro" id="IPR001375">
    <property type="entry name" value="Peptidase_S9_cat"/>
</dbReference>
<dbReference type="InterPro" id="IPR020841">
    <property type="entry name" value="PKS_Beta-ketoAc_synthase_dom"/>
</dbReference>
<dbReference type="InterPro" id="IPR042104">
    <property type="entry name" value="PKS_dehydratase_sf"/>
</dbReference>
<dbReference type="InterPro" id="IPR020807">
    <property type="entry name" value="PKS_DH"/>
</dbReference>
<dbReference type="InterPro" id="IPR049551">
    <property type="entry name" value="PKS_DH_C"/>
</dbReference>
<dbReference type="InterPro" id="IPR049552">
    <property type="entry name" value="PKS_DH_N"/>
</dbReference>
<dbReference type="InterPro" id="IPR049900">
    <property type="entry name" value="PKS_mFAS_DH"/>
</dbReference>
<dbReference type="InterPro" id="IPR050091">
    <property type="entry name" value="PKS_NRPS_Biosynth_Enz"/>
</dbReference>
<dbReference type="InterPro" id="IPR020806">
    <property type="entry name" value="PKS_PP-bd"/>
</dbReference>
<dbReference type="InterPro" id="IPR009081">
    <property type="entry name" value="PP-bd_ACP"/>
</dbReference>
<dbReference type="InterPro" id="IPR006162">
    <property type="entry name" value="Ppantetheine_attach_site"/>
</dbReference>
<dbReference type="InterPro" id="IPR029063">
    <property type="entry name" value="SAM-dependent_MTases_sf"/>
</dbReference>
<dbReference type="InterPro" id="IPR032088">
    <property type="entry name" value="SAT"/>
</dbReference>
<dbReference type="InterPro" id="IPR016039">
    <property type="entry name" value="Thiolase-like"/>
</dbReference>
<dbReference type="PANTHER" id="PTHR43775">
    <property type="entry name" value="FATTY ACID SYNTHASE"/>
    <property type="match status" value="1"/>
</dbReference>
<dbReference type="PANTHER" id="PTHR43775:SF21">
    <property type="entry name" value="NON-REDUCING POLYKETIDE SYNTHASE AUSA-RELATED"/>
    <property type="match status" value="1"/>
</dbReference>
<dbReference type="Pfam" id="PF00698">
    <property type="entry name" value="Acyl_transf_1"/>
    <property type="match status" value="1"/>
</dbReference>
<dbReference type="Pfam" id="PF20434">
    <property type="entry name" value="BD-FAE"/>
    <property type="match status" value="1"/>
</dbReference>
<dbReference type="Pfam" id="PF18558">
    <property type="entry name" value="HTH_51"/>
    <property type="match status" value="1"/>
</dbReference>
<dbReference type="Pfam" id="PF00109">
    <property type="entry name" value="ketoacyl-synt"/>
    <property type="match status" value="1"/>
</dbReference>
<dbReference type="Pfam" id="PF02801">
    <property type="entry name" value="Ketoacyl-synt_C"/>
    <property type="match status" value="1"/>
</dbReference>
<dbReference type="Pfam" id="PF08242">
    <property type="entry name" value="Methyltransf_12"/>
    <property type="match status" value="1"/>
</dbReference>
<dbReference type="Pfam" id="PF00326">
    <property type="entry name" value="Peptidase_S9"/>
    <property type="match status" value="1"/>
</dbReference>
<dbReference type="Pfam" id="PF21089">
    <property type="entry name" value="PKS_DH_N"/>
    <property type="match status" value="1"/>
</dbReference>
<dbReference type="Pfam" id="PF00550">
    <property type="entry name" value="PP-binding"/>
    <property type="match status" value="1"/>
</dbReference>
<dbReference type="Pfam" id="PF14765">
    <property type="entry name" value="PS-DH"/>
    <property type="match status" value="1"/>
</dbReference>
<dbReference type="Pfam" id="PF16073">
    <property type="entry name" value="SAT"/>
    <property type="match status" value="1"/>
</dbReference>
<dbReference type="SMART" id="SM00827">
    <property type="entry name" value="PKS_AT"/>
    <property type="match status" value="1"/>
</dbReference>
<dbReference type="SMART" id="SM00826">
    <property type="entry name" value="PKS_DH"/>
    <property type="match status" value="1"/>
</dbReference>
<dbReference type="SMART" id="SM00825">
    <property type="entry name" value="PKS_KS"/>
    <property type="match status" value="1"/>
</dbReference>
<dbReference type="SMART" id="SM00823">
    <property type="entry name" value="PKS_PP"/>
    <property type="match status" value="1"/>
</dbReference>
<dbReference type="SMART" id="SM01294">
    <property type="entry name" value="PKS_PP_betabranch"/>
    <property type="match status" value="1"/>
</dbReference>
<dbReference type="SUPFAM" id="SSF47336">
    <property type="entry name" value="ACP-like"/>
    <property type="match status" value="1"/>
</dbReference>
<dbReference type="SUPFAM" id="SSF53474">
    <property type="entry name" value="alpha/beta-Hydrolases"/>
    <property type="match status" value="1"/>
</dbReference>
<dbReference type="SUPFAM" id="SSF52151">
    <property type="entry name" value="FabD/lysophospholipase-like"/>
    <property type="match status" value="1"/>
</dbReference>
<dbReference type="SUPFAM" id="SSF55048">
    <property type="entry name" value="Probable ACP-binding domain of malonyl-CoA ACP transacylase"/>
    <property type="match status" value="1"/>
</dbReference>
<dbReference type="SUPFAM" id="SSF53335">
    <property type="entry name" value="S-adenosyl-L-methionine-dependent methyltransferases"/>
    <property type="match status" value="1"/>
</dbReference>
<dbReference type="SUPFAM" id="SSF53901">
    <property type="entry name" value="Thiolase-like"/>
    <property type="match status" value="1"/>
</dbReference>
<dbReference type="PROSITE" id="PS50075">
    <property type="entry name" value="CARRIER"/>
    <property type="match status" value="1"/>
</dbReference>
<dbReference type="PROSITE" id="PS00606">
    <property type="entry name" value="KS3_1"/>
    <property type="match status" value="1"/>
</dbReference>
<dbReference type="PROSITE" id="PS52004">
    <property type="entry name" value="KS3_2"/>
    <property type="match status" value="1"/>
</dbReference>
<dbReference type="PROSITE" id="PS00012">
    <property type="entry name" value="PHOSPHOPANTETHEINE"/>
    <property type="match status" value="1"/>
</dbReference>
<dbReference type="PROSITE" id="PS52019">
    <property type="entry name" value="PKS_MFAS_DH"/>
    <property type="match status" value="1"/>
</dbReference>
<accession>F1DBA9</accession>
<reference key="1">
    <citation type="journal article" date="2011" name="Appl. Environ. Microbiol.">
        <title>Molecular basis for mycophenolic acid biosynthesis in Penicillium brevicompactum.</title>
        <authorList>
            <person name="Regueira T.B."/>
            <person name="Kildegaard K.R."/>
            <person name="Hansen B.G."/>
            <person name="Mortensen U.H."/>
            <person name="Hertweck C."/>
            <person name="Nielsen J."/>
        </authorList>
    </citation>
    <scope>NUCLEOTIDE SEQUENCE [GENOMIC DNA]</scope>
    <scope>FUNCTION</scope>
    <scope>DISRUPTION PHENOTYPE</scope>
    <scope>PATHWAY</scope>
    <source>
        <strain>IBT 23078</strain>
    </source>
</reference>
<reference key="2">
    <citation type="journal article" date="2011" name="Appl. Environ. Microbiol.">
        <title>Versatile enzyme expression and characterization system for Aspergillus nidulans, with the Penicillium brevicompactum polyketide synthase gene from the mycophenolic acid gene cluster as a test case.</title>
        <authorList>
            <person name="Hansen B.G."/>
            <person name="Salomonsen B."/>
            <person name="Nielsen M.T."/>
            <person name="Nielsen J.B."/>
            <person name="Hansen N.B."/>
            <person name="Nielsen K.F."/>
            <person name="Regueira T.B."/>
            <person name="Nielsen J."/>
            <person name="Patil K.R."/>
            <person name="Mortensen U.H."/>
        </authorList>
    </citation>
    <scope>FUNCTION</scope>
    <scope>CATALYTIC ACTIVITY</scope>
    <scope>MUTAGENESIS OF ASP-1643 AND SER-1644</scope>
    <scope>PATHWAY</scope>
</reference>
<reference key="3">
    <citation type="journal article" date="2012" name="Appl. Environ. Microbiol.">
        <title>Involvement of a natural fusion of a cytochrome p450 and a hydrolase in mycophenolic acid biosynthesis.</title>
        <authorList>
            <person name="Hansen B.G."/>
            <person name="Mnich E."/>
            <person name="Nielsen K.F."/>
            <person name="Nielsen J.B."/>
            <person name="Nielsen M.T."/>
            <person name="Mortensen U.H."/>
            <person name="Larsen T.O."/>
            <person name="Patil K.R."/>
        </authorList>
    </citation>
    <scope>FUNCTION</scope>
    <source>
        <strain>IBT23078</strain>
    </source>
</reference>
<name>MPAC_PENBR</name>
<feature type="chain" id="PRO_0000436572" description="Non-reducing polyketide synthase mapC">
    <location>
        <begin position="1"/>
        <end position="2448"/>
    </location>
</feature>
<feature type="domain" description="Ketosynthase family 3 (KS3)" evidence="6">
    <location>
        <begin position="359"/>
        <end position="775"/>
    </location>
</feature>
<feature type="domain" description="PKS/mFAS DH" evidence="7">
    <location>
        <begin position="1256"/>
        <end position="1565"/>
    </location>
</feature>
<feature type="domain" description="Carrier" evidence="5">
    <location>
        <begin position="1610"/>
        <end position="1684"/>
    </location>
</feature>
<feature type="region of interest" description="N-terminal acylcarrier protein transacylase domain (SAT)" evidence="4">
    <location>
        <begin position="14"/>
        <end position="226"/>
    </location>
</feature>
<feature type="region of interest" description="Disordered" evidence="9">
    <location>
        <begin position="330"/>
        <end position="350"/>
    </location>
</feature>
<feature type="region of interest" description="Malonyl-CoA:ACP transacylase (MAT) domain" evidence="4">
    <location>
        <begin position="885"/>
        <end position="1188"/>
    </location>
</feature>
<feature type="region of interest" description="N-terminal hotdog fold" evidence="7">
    <location>
        <begin position="1256"/>
        <end position="1388"/>
    </location>
</feature>
<feature type="region of interest" description="Product template (PT) domain" evidence="4">
    <location>
        <begin position="1261"/>
        <end position="1564"/>
    </location>
</feature>
<feature type="region of interest" description="C-terminal hotdog fold" evidence="7">
    <location>
        <begin position="1414"/>
        <end position="1565"/>
    </location>
</feature>
<feature type="region of interest" description="Methyltransferase (CMeT) domain" evidence="4">
    <location>
        <begin position="1841"/>
        <end position="2076"/>
    </location>
</feature>
<feature type="active site" description="For beta-ketoacyl synthase activity" evidence="6">
    <location>
        <position position="524"/>
    </location>
</feature>
<feature type="active site" description="For beta-ketoacyl synthase activity" evidence="6">
    <location>
        <position position="659"/>
    </location>
</feature>
<feature type="active site" description="For beta-ketoacyl synthase activity" evidence="6">
    <location>
        <position position="698"/>
    </location>
</feature>
<feature type="active site" description="For acyl/malonyl transferase activity" evidence="8">
    <location>
        <position position="972"/>
    </location>
</feature>
<feature type="active site" description="Proton acceptor; for dehydratase activity" evidence="7">
    <location>
        <position position="1290"/>
    </location>
</feature>
<feature type="active site" description="Proton donor; for dehydratase activity" evidence="7">
    <location>
        <position position="1471"/>
    </location>
</feature>
<feature type="active site" description="For thioesterase activity" evidence="2">
    <location>
        <position position="2227"/>
    </location>
</feature>
<feature type="active site" description="For thioesterase activity" evidence="2">
    <location>
        <position position="2385"/>
    </location>
</feature>
<feature type="active site" description="For thioesterase activity" evidence="2">
    <location>
        <position position="2417"/>
    </location>
</feature>
<feature type="modified residue" description="O-(pantetheine 4'-phosphoryl)serine" evidence="5">
    <location>
        <position position="1644"/>
    </location>
</feature>
<feature type="mutagenesis site" description="Impairs the production of 5-methylorsellinic acid (5-MOA)." evidence="11">
    <original>D</original>
    <variation>A</variation>
    <location>
        <position position="1643"/>
    </location>
</feature>
<feature type="mutagenesis site" description="Impairs the production of 5-methylorsellinic acid (5-MOA)." evidence="11">
    <original>S</original>
    <variation>A</variation>
    <location>
        <position position="1644"/>
    </location>
</feature>
<comment type="function">
    <text evidence="10 11 13 14">Non-reducing polyketide synthase; part of the gene cluster that mediates the biosynthesis of mycophenolic acid (MPA), the first isolated antibiotic natural product in the world obtained from a culture of Penicillium brevicompactum in 1893 (PubMed:21398490, PubMed:21398493). MpaC catalyzes the synthesis of 5-methylorsellinic acid (5MOA) via the condensation of 1 acetyl-CoA starter unit with 3 malonyl-CoA units and one methylation step (PubMed:21398493). The first step of the pathway is the synthesis of 5-methylorsellinic acid (5MOA) by the cytosolic polyketide synthase mpaC. 5MOA is then converted to the phthalide compound 5,7-dihydroxy-4,6-dimethylphthalide (DHMP) by the endoplasmic reticulum-bound cytochrome P450 monooxygenase mpaDE. MpaDE first catalyzes hydroxylation of 5-MOA to 4,6-dihydroxy-2-(hydroxymethyl)-3-methylbenzoic acid (DHMB). MpaDE then acts as a lactone synthase that catalyzes the ring closure to convert DHMB into DHMP. The next step is the prenylation of DHMP by the Golgi apparatus-associated prenyltransferase mpaA to yield farnesyl-DHMP (FDHMP). The ER-bound oxygenase mpaB then mediates the oxidative cleavage the C19-C20 double bond in FDHMP to yield FDHMP-3C via a mycophenolic aldehyde intermediate. The O-methyltransferase mpaG catalyzes the methylation of FDHMP-3C to yield MFDHMP-3C. After the cytosolic methylation of FDHMP-3C, MFDHMP-3C enters into peroxisomes probably via free diffusion due to its low molecular weight. Upon a peroxisomal CoA ligation reaction, catalyzed by a beta-oxidation component enzyme acyl-CoA ligase ACL891, MFDHMP-3C-CoA would then be restricted to peroxisomes for the following beta-oxidation pathway steps. The peroxisomal beta-oxidation machinery than converts MFDHMP-3C-CoA into MPA_CoA, via a beta-oxidation chain-shortening process. Finally mpaH acts as a peroxisomal acyl-CoA hydrolase with high substrate specificity toward MPA-CoA to release the final product MPA (Probable) (PubMed:21398490, PubMed:22544261).</text>
</comment>
<comment type="catalytic activity">
    <reaction evidence="11">
        <text>3 malonyl-CoA + acetyl-CoA + S-adenosyl-L-methionine + H(+) = 5-methylorsellinate + S-adenosyl-L-homocysteine + 3 CO2 + 4 CoA</text>
        <dbReference type="Rhea" id="RHEA:63056"/>
        <dbReference type="ChEBI" id="CHEBI:15378"/>
        <dbReference type="ChEBI" id="CHEBI:16526"/>
        <dbReference type="ChEBI" id="CHEBI:57287"/>
        <dbReference type="ChEBI" id="CHEBI:57288"/>
        <dbReference type="ChEBI" id="CHEBI:57384"/>
        <dbReference type="ChEBI" id="CHEBI:57856"/>
        <dbReference type="ChEBI" id="CHEBI:59789"/>
        <dbReference type="ChEBI" id="CHEBI:146172"/>
    </reaction>
    <physiologicalReaction direction="left-to-right" evidence="11">
        <dbReference type="Rhea" id="RHEA:63057"/>
    </physiologicalReaction>
</comment>
<comment type="pathway">
    <text evidence="10">Secondary metabolite biosynthesis; terpenoid biosynthesis.</text>
</comment>
<comment type="subcellular location">
    <subcellularLocation>
        <location evidence="1">Cytoplasm</location>
        <location evidence="1">Cytosol</location>
    </subcellularLocation>
</comment>
<comment type="domain">
    <text evidence="3">Multidomain protein; including a starter unit:ACP transacylase (SAT) that selects the starter unit; a ketosynthase (KS) that catalyzes repeated decarboxylative condensation to elongate the polyketide backbone; a malonyl-CoA:ACP transacylase (MAT) that selects and transfers the extender unit malonyl-CoA; a product template (PT) domain that controls the immediate cyclization regioselectivity of the reactive polyketide backbone; and an acyl-carrier protein (ACP) that serves as the tether of the growing and completed polyketide via its phosphopantetheinyl arm (By similarity).</text>
</comment>
<comment type="disruption phenotype">
    <text evidence="10">Loses the ability to produce mycophenolic acid (MPA) and several MPA-related compounds, such as MPA diol lactone, 4-O-mycophenolate, and deacetyl pebrolide (PubMed:21398490).</text>
</comment>
<organism>
    <name type="scientific">Penicillium brevicompactum</name>
    <dbReference type="NCBI Taxonomy" id="5074"/>
    <lineage>
        <taxon>Eukaryota</taxon>
        <taxon>Fungi</taxon>
        <taxon>Dikarya</taxon>
        <taxon>Ascomycota</taxon>
        <taxon>Pezizomycotina</taxon>
        <taxon>Eurotiomycetes</taxon>
        <taxon>Eurotiomycetidae</taxon>
        <taxon>Eurotiales</taxon>
        <taxon>Aspergillaceae</taxon>
        <taxon>Penicillium</taxon>
    </lineage>
</organism>